<evidence type="ECO:0000255" key="1">
    <source>
        <dbReference type="HAMAP-Rule" id="MF_00402"/>
    </source>
</evidence>
<evidence type="ECO:0000305" key="2"/>
<proteinExistence type="inferred from homology"/>
<protein>
    <recommendedName>
        <fullName evidence="1">Large ribosomal subunit protein bL19</fullName>
    </recommendedName>
    <alternativeName>
        <fullName evidence="2">50S ribosomal protein L19</fullName>
    </alternativeName>
</protein>
<reference key="1">
    <citation type="submission" date="2006-11" db="EMBL/GenBank/DDBJ databases">
        <title>Identification and characterization of a new conjugation/ type IVA secretion system (trb/tra) of L. pneumophila Corby localized on a mobile genomic island.</title>
        <authorList>
            <person name="Gloeckner G."/>
            <person name="Albert-Weissenberger C."/>
            <person name="Weinmann E."/>
            <person name="Jacobi S."/>
            <person name="Schunder E."/>
            <person name="Steinert M."/>
            <person name="Buchrieser C."/>
            <person name="Hacker J."/>
            <person name="Heuner K."/>
        </authorList>
    </citation>
    <scope>NUCLEOTIDE SEQUENCE [LARGE SCALE GENOMIC DNA]</scope>
    <source>
        <strain>Corby</strain>
    </source>
</reference>
<comment type="function">
    <text evidence="1">This protein is located at the 30S-50S ribosomal subunit interface and may play a role in the structure and function of the aminoacyl-tRNA binding site.</text>
</comment>
<comment type="similarity">
    <text evidence="1">Belongs to the bacterial ribosomal protein bL19 family.</text>
</comment>
<keyword id="KW-0687">Ribonucleoprotein</keyword>
<keyword id="KW-0689">Ribosomal protein</keyword>
<organism>
    <name type="scientific">Legionella pneumophila (strain Corby)</name>
    <dbReference type="NCBI Taxonomy" id="400673"/>
    <lineage>
        <taxon>Bacteria</taxon>
        <taxon>Pseudomonadati</taxon>
        <taxon>Pseudomonadota</taxon>
        <taxon>Gammaproteobacteria</taxon>
        <taxon>Legionellales</taxon>
        <taxon>Legionellaceae</taxon>
        <taxon>Legionella</taxon>
    </lineage>
</organism>
<dbReference type="EMBL" id="CP000675">
    <property type="protein sequence ID" value="ABQ56848.1"/>
    <property type="molecule type" value="Genomic_DNA"/>
</dbReference>
<dbReference type="RefSeq" id="WP_010946144.1">
    <property type="nucleotide sequence ID" value="NZ_JAPMSS010000006.1"/>
</dbReference>
<dbReference type="SMR" id="A5IHJ8"/>
<dbReference type="GeneID" id="57034399"/>
<dbReference type="KEGG" id="lpc:LPC_2947"/>
<dbReference type="HOGENOM" id="CLU_103507_1_0_6"/>
<dbReference type="GO" id="GO:0022625">
    <property type="term" value="C:cytosolic large ribosomal subunit"/>
    <property type="evidence" value="ECO:0007669"/>
    <property type="project" value="TreeGrafter"/>
</dbReference>
<dbReference type="GO" id="GO:0003735">
    <property type="term" value="F:structural constituent of ribosome"/>
    <property type="evidence" value="ECO:0007669"/>
    <property type="project" value="InterPro"/>
</dbReference>
<dbReference type="GO" id="GO:0006412">
    <property type="term" value="P:translation"/>
    <property type="evidence" value="ECO:0007669"/>
    <property type="project" value="UniProtKB-UniRule"/>
</dbReference>
<dbReference type="FunFam" id="2.30.30.790:FF:000001">
    <property type="entry name" value="50S ribosomal protein L19"/>
    <property type="match status" value="1"/>
</dbReference>
<dbReference type="Gene3D" id="2.30.30.790">
    <property type="match status" value="1"/>
</dbReference>
<dbReference type="HAMAP" id="MF_00402">
    <property type="entry name" value="Ribosomal_bL19"/>
    <property type="match status" value="1"/>
</dbReference>
<dbReference type="InterPro" id="IPR001857">
    <property type="entry name" value="Ribosomal_bL19"/>
</dbReference>
<dbReference type="InterPro" id="IPR018257">
    <property type="entry name" value="Ribosomal_bL19_CS"/>
</dbReference>
<dbReference type="InterPro" id="IPR038657">
    <property type="entry name" value="Ribosomal_bL19_sf"/>
</dbReference>
<dbReference type="InterPro" id="IPR008991">
    <property type="entry name" value="Translation_prot_SH3-like_sf"/>
</dbReference>
<dbReference type="NCBIfam" id="TIGR01024">
    <property type="entry name" value="rplS_bact"/>
    <property type="match status" value="1"/>
</dbReference>
<dbReference type="PANTHER" id="PTHR15680:SF9">
    <property type="entry name" value="LARGE RIBOSOMAL SUBUNIT PROTEIN BL19M"/>
    <property type="match status" value="1"/>
</dbReference>
<dbReference type="PANTHER" id="PTHR15680">
    <property type="entry name" value="RIBOSOMAL PROTEIN L19"/>
    <property type="match status" value="1"/>
</dbReference>
<dbReference type="Pfam" id="PF01245">
    <property type="entry name" value="Ribosomal_L19"/>
    <property type="match status" value="1"/>
</dbReference>
<dbReference type="PIRSF" id="PIRSF002191">
    <property type="entry name" value="Ribosomal_L19"/>
    <property type="match status" value="1"/>
</dbReference>
<dbReference type="PRINTS" id="PR00061">
    <property type="entry name" value="RIBOSOMALL19"/>
</dbReference>
<dbReference type="SUPFAM" id="SSF50104">
    <property type="entry name" value="Translation proteins SH3-like domain"/>
    <property type="match status" value="1"/>
</dbReference>
<dbReference type="PROSITE" id="PS01015">
    <property type="entry name" value="RIBOSOMAL_L19"/>
    <property type="match status" value="1"/>
</dbReference>
<gene>
    <name evidence="1" type="primary">rplS</name>
    <name type="ordered locus">LPC_2947</name>
</gene>
<name>RL19_LEGPC</name>
<sequence>MTNIIDQINAEQMQGKEIPDFNPGDTVLVQVKVIEGNRERLQAFEGVVIAKRNRGLNSAFTVRKISHNVGVERVFQTYSPIVDSITVKRRGDVRRAKLYYLRNLAGRAARIKEKLSGKKGD</sequence>
<feature type="chain" id="PRO_1000049693" description="Large ribosomal subunit protein bL19">
    <location>
        <begin position="1"/>
        <end position="121"/>
    </location>
</feature>
<accession>A5IHJ8</accession>